<reference key="1">
    <citation type="journal article" date="2007" name="Genome Res.">
        <title>Reductive evolution and niche adaptation inferred from the genome of Mycobacterium ulcerans, the causative agent of Buruli ulcer.</title>
        <authorList>
            <person name="Stinear T.P."/>
            <person name="Seemann T."/>
            <person name="Pidot S."/>
            <person name="Frigui W."/>
            <person name="Reysset G."/>
            <person name="Garnier T."/>
            <person name="Meurice G."/>
            <person name="Simon D."/>
            <person name="Bouchier C."/>
            <person name="Ma L."/>
            <person name="Tichit M."/>
            <person name="Porter J.L."/>
            <person name="Ryan J."/>
            <person name="Johnson P.D.R."/>
            <person name="Davies J.K."/>
            <person name="Jenkin G.A."/>
            <person name="Small P.L.C."/>
            <person name="Jones L.M."/>
            <person name="Tekaia F."/>
            <person name="Laval F."/>
            <person name="Daffe M."/>
            <person name="Parkhill J."/>
            <person name="Cole S.T."/>
        </authorList>
    </citation>
    <scope>NUCLEOTIDE SEQUENCE [LARGE SCALE GENOMIC DNA]</scope>
    <source>
        <strain>Agy99</strain>
    </source>
</reference>
<keyword id="KW-0342">GTP-binding</keyword>
<keyword id="KW-0547">Nucleotide-binding</keyword>
<keyword id="KW-0548">Nucleotidyltransferase</keyword>
<keyword id="KW-0808">Transferase</keyword>
<comment type="function">
    <text evidence="1">Guanylyltransferase that catalyzes the activation of phosphoenolpyruvate (PEP) as enolpyruvoyl-2-diphospho-5'-guanosine, via the condensation of PEP with GTP. It is involved in the biosynthesis of coenzyme F420, a hydride carrier cofactor.</text>
</comment>
<comment type="catalytic activity">
    <reaction evidence="1">
        <text>phosphoenolpyruvate + GTP + H(+) = enolpyruvoyl-2-diphospho-5'-guanosine + diphosphate</text>
        <dbReference type="Rhea" id="RHEA:30519"/>
        <dbReference type="ChEBI" id="CHEBI:15378"/>
        <dbReference type="ChEBI" id="CHEBI:33019"/>
        <dbReference type="ChEBI" id="CHEBI:37565"/>
        <dbReference type="ChEBI" id="CHEBI:58702"/>
        <dbReference type="ChEBI" id="CHEBI:143701"/>
        <dbReference type="EC" id="2.7.7.105"/>
    </reaction>
</comment>
<comment type="pathway">
    <text evidence="1">Cofactor biosynthesis; coenzyme F420 biosynthesis.</text>
</comment>
<comment type="similarity">
    <text evidence="1">Belongs to the CofC family.</text>
</comment>
<sequence length="217" mass="22122">MSGIRADGTGDVGLIIAVKRLSAAKTRLAPVFSAAARESVVLAMLMDTLTAAARVGDLRSITVITPDESAAAAATELGAEVLADPTRQGDPDPLNNAILTAEQVVSGSVPNIVVLQGDLPAMQTQELADAICAARAHQRSFVADRLGTGTAALCAFGSALDPQFGPDSSAQHRRSGAVELTGAWPGLRCDVDTPADLAAARSLGVGPATARVVAHHR</sequence>
<name>FBID_MYCUA</name>
<accession>A0PQ01</accession>
<protein>
    <recommendedName>
        <fullName evidence="1">Phosphoenolpyruvate guanylyltransferase</fullName>
        <shortName evidence="1">PEP guanylyltransferase</shortName>
        <ecNumber evidence="1">2.7.7.105</ecNumber>
    </recommendedName>
</protein>
<proteinExistence type="inferred from homology"/>
<gene>
    <name evidence="1" type="primary">fbiD</name>
    <name type="ordered locus">MUL_1973</name>
</gene>
<organism>
    <name type="scientific">Mycobacterium ulcerans (strain Agy99)</name>
    <dbReference type="NCBI Taxonomy" id="362242"/>
    <lineage>
        <taxon>Bacteria</taxon>
        <taxon>Bacillati</taxon>
        <taxon>Actinomycetota</taxon>
        <taxon>Actinomycetes</taxon>
        <taxon>Mycobacteriales</taxon>
        <taxon>Mycobacteriaceae</taxon>
        <taxon>Mycobacterium</taxon>
        <taxon>Mycobacterium ulcerans group</taxon>
    </lineage>
</organism>
<dbReference type="EC" id="2.7.7.105" evidence="1"/>
<dbReference type="EMBL" id="CP000325">
    <property type="protein sequence ID" value="ABL04420.1"/>
    <property type="molecule type" value="Genomic_DNA"/>
</dbReference>
<dbReference type="RefSeq" id="WP_011740039.1">
    <property type="nucleotide sequence ID" value="NC_008611.1"/>
</dbReference>
<dbReference type="SMR" id="A0PQ01"/>
<dbReference type="KEGG" id="mul:MUL_1973"/>
<dbReference type="eggNOG" id="COG1920">
    <property type="taxonomic scope" value="Bacteria"/>
</dbReference>
<dbReference type="HOGENOM" id="CLU_076569_0_0_11"/>
<dbReference type="UniPathway" id="UPA00071"/>
<dbReference type="Proteomes" id="UP000000765">
    <property type="component" value="Chromosome"/>
</dbReference>
<dbReference type="GO" id="GO:0005525">
    <property type="term" value="F:GTP binding"/>
    <property type="evidence" value="ECO:0007669"/>
    <property type="project" value="UniProtKB-KW"/>
</dbReference>
<dbReference type="GO" id="GO:0043814">
    <property type="term" value="F:phospholactate guanylyltransferase activity"/>
    <property type="evidence" value="ECO:0007669"/>
    <property type="project" value="InterPro"/>
</dbReference>
<dbReference type="GO" id="GO:0052645">
    <property type="term" value="P:F420-0 metabolic process"/>
    <property type="evidence" value="ECO:0007669"/>
    <property type="project" value="UniProtKB-UniRule"/>
</dbReference>
<dbReference type="Gene3D" id="3.90.550.10">
    <property type="entry name" value="Spore Coat Polysaccharide Biosynthesis Protein SpsA, Chain A"/>
    <property type="match status" value="1"/>
</dbReference>
<dbReference type="HAMAP" id="MF_02114">
    <property type="entry name" value="CofC"/>
    <property type="match status" value="1"/>
</dbReference>
<dbReference type="InterPro" id="IPR002835">
    <property type="entry name" value="CofC"/>
</dbReference>
<dbReference type="InterPro" id="IPR029044">
    <property type="entry name" value="Nucleotide-diphossugar_trans"/>
</dbReference>
<dbReference type="NCBIfam" id="TIGR03552">
    <property type="entry name" value="F420_cofC"/>
    <property type="match status" value="1"/>
</dbReference>
<dbReference type="PANTHER" id="PTHR40392">
    <property type="entry name" value="2-PHOSPHO-L-LACTATE GUANYLYLTRANSFERASE"/>
    <property type="match status" value="1"/>
</dbReference>
<dbReference type="PANTHER" id="PTHR40392:SF1">
    <property type="entry name" value="2-PHOSPHO-L-LACTATE GUANYLYLTRANSFERASE"/>
    <property type="match status" value="1"/>
</dbReference>
<dbReference type="Pfam" id="PF01983">
    <property type="entry name" value="CofC"/>
    <property type="match status" value="1"/>
</dbReference>
<dbReference type="SUPFAM" id="SSF53448">
    <property type="entry name" value="Nucleotide-diphospho-sugar transferases"/>
    <property type="match status" value="1"/>
</dbReference>
<feature type="chain" id="PRO_0000398700" description="Phosphoenolpyruvate guanylyltransferase">
    <location>
        <begin position="1"/>
        <end position="217"/>
    </location>
</feature>
<feature type="binding site" evidence="1">
    <location>
        <position position="150"/>
    </location>
    <ligand>
        <name>phosphoenolpyruvate</name>
        <dbReference type="ChEBI" id="CHEBI:58702"/>
    </ligand>
</feature>
<feature type="binding site" evidence="1">
    <location>
        <position position="165"/>
    </location>
    <ligand>
        <name>phosphoenolpyruvate</name>
        <dbReference type="ChEBI" id="CHEBI:58702"/>
    </ligand>
</feature>
<feature type="binding site" evidence="1">
    <location>
        <position position="168"/>
    </location>
    <ligand>
        <name>phosphoenolpyruvate</name>
        <dbReference type="ChEBI" id="CHEBI:58702"/>
    </ligand>
</feature>
<evidence type="ECO:0000255" key="1">
    <source>
        <dbReference type="HAMAP-Rule" id="MF_02114"/>
    </source>
</evidence>